<proteinExistence type="inferred from homology"/>
<sequence length="209" mass="22276">MIGLVGKKVGMTRIFTEDGVSIPVTVIEVEANRVTQVKDLANDGYRAVQVTTGVKKANRVTKPEAGHFAKAGVEAGRGLWEFRLAEGEEYTVGQSISVELFADVKKVDVTGTSKGKGFAGTVKRWNFRTQDATHGNSLSHRVPGSIGQNQTPGKVFKGKKMAGQMGNERVTVQSLDVVRVDAERNLLLVKGGVPGATGCDLIVKPAVKA</sequence>
<dbReference type="EMBL" id="CP000880">
    <property type="protein sequence ID" value="ABX23976.1"/>
    <property type="molecule type" value="Genomic_DNA"/>
</dbReference>
<dbReference type="SMR" id="A9MN46"/>
<dbReference type="STRING" id="41514.SARI_04187"/>
<dbReference type="KEGG" id="ses:SARI_04187"/>
<dbReference type="HOGENOM" id="CLU_044142_4_1_6"/>
<dbReference type="Proteomes" id="UP000002084">
    <property type="component" value="Chromosome"/>
</dbReference>
<dbReference type="GO" id="GO:0022625">
    <property type="term" value="C:cytosolic large ribosomal subunit"/>
    <property type="evidence" value="ECO:0007669"/>
    <property type="project" value="TreeGrafter"/>
</dbReference>
<dbReference type="GO" id="GO:0019843">
    <property type="term" value="F:rRNA binding"/>
    <property type="evidence" value="ECO:0007669"/>
    <property type="project" value="UniProtKB-UniRule"/>
</dbReference>
<dbReference type="GO" id="GO:0003735">
    <property type="term" value="F:structural constituent of ribosome"/>
    <property type="evidence" value="ECO:0007669"/>
    <property type="project" value="InterPro"/>
</dbReference>
<dbReference type="GO" id="GO:0006412">
    <property type="term" value="P:translation"/>
    <property type="evidence" value="ECO:0007669"/>
    <property type="project" value="UniProtKB-UniRule"/>
</dbReference>
<dbReference type="FunFam" id="2.40.30.10:FF:000004">
    <property type="entry name" value="50S ribosomal protein L3"/>
    <property type="match status" value="1"/>
</dbReference>
<dbReference type="FunFam" id="3.30.160.810:FF:000001">
    <property type="entry name" value="50S ribosomal protein L3"/>
    <property type="match status" value="1"/>
</dbReference>
<dbReference type="Gene3D" id="3.30.160.810">
    <property type="match status" value="1"/>
</dbReference>
<dbReference type="Gene3D" id="2.40.30.10">
    <property type="entry name" value="Translation factors"/>
    <property type="match status" value="1"/>
</dbReference>
<dbReference type="HAMAP" id="MF_01325_B">
    <property type="entry name" value="Ribosomal_uL3_B"/>
    <property type="match status" value="1"/>
</dbReference>
<dbReference type="InterPro" id="IPR000597">
    <property type="entry name" value="Ribosomal_uL3"/>
</dbReference>
<dbReference type="InterPro" id="IPR019927">
    <property type="entry name" value="Ribosomal_uL3_bac/org-type"/>
</dbReference>
<dbReference type="InterPro" id="IPR019926">
    <property type="entry name" value="Ribosomal_uL3_CS"/>
</dbReference>
<dbReference type="InterPro" id="IPR009000">
    <property type="entry name" value="Transl_B-barrel_sf"/>
</dbReference>
<dbReference type="NCBIfam" id="TIGR03625">
    <property type="entry name" value="L3_bact"/>
    <property type="match status" value="1"/>
</dbReference>
<dbReference type="PANTHER" id="PTHR11229">
    <property type="entry name" value="50S RIBOSOMAL PROTEIN L3"/>
    <property type="match status" value="1"/>
</dbReference>
<dbReference type="PANTHER" id="PTHR11229:SF16">
    <property type="entry name" value="LARGE RIBOSOMAL SUBUNIT PROTEIN UL3C"/>
    <property type="match status" value="1"/>
</dbReference>
<dbReference type="Pfam" id="PF00297">
    <property type="entry name" value="Ribosomal_L3"/>
    <property type="match status" value="1"/>
</dbReference>
<dbReference type="SUPFAM" id="SSF50447">
    <property type="entry name" value="Translation proteins"/>
    <property type="match status" value="1"/>
</dbReference>
<dbReference type="PROSITE" id="PS00474">
    <property type="entry name" value="RIBOSOMAL_L3"/>
    <property type="match status" value="1"/>
</dbReference>
<protein>
    <recommendedName>
        <fullName evidence="1">Large ribosomal subunit protein uL3</fullName>
    </recommendedName>
    <alternativeName>
        <fullName evidence="2">50S ribosomal protein L3</fullName>
    </alternativeName>
</protein>
<evidence type="ECO:0000255" key="1">
    <source>
        <dbReference type="HAMAP-Rule" id="MF_01325"/>
    </source>
</evidence>
<evidence type="ECO:0000305" key="2"/>
<keyword id="KW-0488">Methylation</keyword>
<keyword id="KW-1185">Reference proteome</keyword>
<keyword id="KW-0687">Ribonucleoprotein</keyword>
<keyword id="KW-0689">Ribosomal protein</keyword>
<keyword id="KW-0694">RNA-binding</keyword>
<keyword id="KW-0699">rRNA-binding</keyword>
<name>RL3_SALAR</name>
<comment type="function">
    <text evidence="1">One of the primary rRNA binding proteins, it binds directly near the 3'-end of the 23S rRNA, where it nucleates assembly of the 50S subunit.</text>
</comment>
<comment type="subunit">
    <text evidence="1">Part of the 50S ribosomal subunit. Forms a cluster with proteins L14 and L19.</text>
</comment>
<comment type="PTM">
    <text evidence="1">Methylated by PrmB.</text>
</comment>
<comment type="similarity">
    <text evidence="1">Belongs to the universal ribosomal protein uL3 family.</text>
</comment>
<feature type="chain" id="PRO_1000086458" description="Large ribosomal subunit protein uL3">
    <location>
        <begin position="1"/>
        <end position="209"/>
    </location>
</feature>
<feature type="modified residue" description="N5-methylglutamine" evidence="1">
    <location>
        <position position="150"/>
    </location>
</feature>
<gene>
    <name evidence="1" type="primary">rplC</name>
    <name type="ordered locus">SARI_04187</name>
</gene>
<reference key="1">
    <citation type="submission" date="2007-11" db="EMBL/GenBank/DDBJ databases">
        <authorList>
            <consortium name="The Salmonella enterica serovar Arizonae Genome Sequencing Project"/>
            <person name="McClelland M."/>
            <person name="Sanderson E.K."/>
            <person name="Porwollik S."/>
            <person name="Spieth J."/>
            <person name="Clifton W.S."/>
            <person name="Fulton R."/>
            <person name="Chunyan W."/>
            <person name="Wollam A."/>
            <person name="Shah N."/>
            <person name="Pepin K."/>
            <person name="Bhonagiri V."/>
            <person name="Nash W."/>
            <person name="Johnson M."/>
            <person name="Thiruvilangam P."/>
            <person name="Wilson R."/>
        </authorList>
    </citation>
    <scope>NUCLEOTIDE SEQUENCE [LARGE SCALE GENOMIC DNA]</scope>
    <source>
        <strain>ATCC BAA-731 / CDC346-86 / RSK2980</strain>
    </source>
</reference>
<organism>
    <name type="scientific">Salmonella arizonae (strain ATCC BAA-731 / CDC346-86 / RSK2980)</name>
    <dbReference type="NCBI Taxonomy" id="41514"/>
    <lineage>
        <taxon>Bacteria</taxon>
        <taxon>Pseudomonadati</taxon>
        <taxon>Pseudomonadota</taxon>
        <taxon>Gammaproteobacteria</taxon>
        <taxon>Enterobacterales</taxon>
        <taxon>Enterobacteriaceae</taxon>
        <taxon>Salmonella</taxon>
    </lineage>
</organism>
<accession>A9MN46</accession>